<feature type="chain" id="PRO_0000165693" description="Caffeoyl-CoA O-methyltransferase 1">
    <location>
        <begin position="1"/>
        <end position="247"/>
    </location>
</feature>
<feature type="binding site" evidence="1">
    <location>
        <position position="21"/>
    </location>
    <ligand>
        <name>substrate</name>
    </ligand>
</feature>
<feature type="binding site" evidence="2">
    <location>
        <position position="63"/>
    </location>
    <ligand>
        <name>S-adenosyl-L-methionine</name>
        <dbReference type="ChEBI" id="CHEBI:59789"/>
    </ligand>
</feature>
<feature type="binding site" evidence="2">
    <location>
        <position position="85"/>
    </location>
    <ligand>
        <name>S-adenosyl-L-methionine</name>
        <dbReference type="ChEBI" id="CHEBI:59789"/>
    </ligand>
</feature>
<feature type="binding site" evidence="2">
    <location>
        <begin position="87"/>
        <end position="88"/>
    </location>
    <ligand>
        <name>S-adenosyl-L-methionine</name>
        <dbReference type="ChEBI" id="CHEBI:59789"/>
    </ligand>
</feature>
<feature type="binding site" evidence="2">
    <location>
        <position position="93"/>
    </location>
    <ligand>
        <name>S-adenosyl-L-methionine</name>
        <dbReference type="ChEBI" id="CHEBI:59789"/>
    </ligand>
</feature>
<feature type="binding site" evidence="2">
    <location>
        <position position="111"/>
    </location>
    <ligand>
        <name>S-adenosyl-L-methionine</name>
        <dbReference type="ChEBI" id="CHEBI:59789"/>
    </ligand>
</feature>
<feature type="binding site" evidence="2">
    <location>
        <position position="140"/>
    </location>
    <ligand>
        <name>S-adenosyl-L-methionine</name>
        <dbReference type="ChEBI" id="CHEBI:59789"/>
    </ligand>
</feature>
<feature type="binding site" evidence="2">
    <location>
        <position position="163"/>
    </location>
    <ligand>
        <name>a divalent metal cation</name>
        <dbReference type="ChEBI" id="CHEBI:60240"/>
    </ligand>
</feature>
<feature type="binding site" evidence="1">
    <location>
        <position position="163"/>
    </location>
    <ligand>
        <name>substrate</name>
    </ligand>
</feature>
<feature type="binding site" evidence="2">
    <location>
        <position position="165"/>
    </location>
    <ligand>
        <name>S-adenosyl-L-methionine</name>
        <dbReference type="ChEBI" id="CHEBI:59789"/>
    </ligand>
</feature>
<feature type="binding site" evidence="2">
    <location>
        <position position="189"/>
    </location>
    <ligand>
        <name>a divalent metal cation</name>
        <dbReference type="ChEBI" id="CHEBI:60240"/>
    </ligand>
</feature>
<feature type="binding site" evidence="2">
    <location>
        <position position="190"/>
    </location>
    <ligand>
        <name>a divalent metal cation</name>
        <dbReference type="ChEBI" id="CHEBI:60240"/>
    </ligand>
</feature>
<feature type="binding site" evidence="1">
    <location>
        <position position="194"/>
    </location>
    <ligand>
        <name>substrate</name>
    </ligand>
</feature>
<name>CAMT1_POPTR</name>
<evidence type="ECO:0000250" key="1">
    <source>
        <dbReference type="UniProtKB" id="Q40313"/>
    </source>
</evidence>
<evidence type="ECO:0000255" key="2">
    <source>
        <dbReference type="PROSITE-ProRule" id="PRU01019"/>
    </source>
</evidence>
<dbReference type="EC" id="2.1.1.104"/>
<dbReference type="EMBL" id="AJ224894">
    <property type="protein sequence ID" value="CAA12198.1"/>
    <property type="molecule type" value="mRNA"/>
</dbReference>
<dbReference type="EMBL" id="AJ223621">
    <property type="protein sequence ID" value="CAA11496.1"/>
    <property type="molecule type" value="Genomic_DNA"/>
</dbReference>
<dbReference type="EMBL" id="AJ130841">
    <property type="protein sequence ID" value="CAA10217.1"/>
    <property type="molecule type" value="mRNA"/>
</dbReference>
<dbReference type="RefSeq" id="XP_002313125.1">
    <property type="nucleotide sequence ID" value="XM_002313089.2"/>
</dbReference>
<dbReference type="SMR" id="O65862"/>
<dbReference type="EnsemblPlants" id="Potri.009G099800.2.v4.1">
    <property type="protein sequence ID" value="Potri.009G099800.2.v4.1"/>
    <property type="gene ID" value="Potri.009G099800.v4.1"/>
</dbReference>
<dbReference type="Gramene" id="Potri.009G099800.2.v4.1">
    <property type="protein sequence ID" value="Potri.009G099800.2.v4.1"/>
    <property type="gene ID" value="Potri.009G099800.v4.1"/>
</dbReference>
<dbReference type="eggNOG" id="KOG1663">
    <property type="taxonomic scope" value="Eukaryota"/>
</dbReference>
<dbReference type="HOGENOM" id="CLU_067676_5_0_1"/>
<dbReference type="OMA" id="CDITDRW"/>
<dbReference type="OrthoDB" id="10251242at2759"/>
<dbReference type="BRENDA" id="2.1.1.104">
    <property type="organism ID" value="4982"/>
</dbReference>
<dbReference type="UniPathway" id="UPA00711"/>
<dbReference type="ExpressionAtlas" id="O65862">
    <property type="expression patterns" value="baseline and differential"/>
</dbReference>
<dbReference type="GO" id="GO:0042409">
    <property type="term" value="F:caffeoyl-CoA O-methyltransferase activity"/>
    <property type="evidence" value="ECO:0007669"/>
    <property type="project" value="UniProtKB-EC"/>
</dbReference>
<dbReference type="GO" id="GO:0046872">
    <property type="term" value="F:metal ion binding"/>
    <property type="evidence" value="ECO:0007669"/>
    <property type="project" value="UniProtKB-KW"/>
</dbReference>
<dbReference type="GO" id="GO:0009809">
    <property type="term" value="P:lignin biosynthetic process"/>
    <property type="evidence" value="ECO:0007669"/>
    <property type="project" value="UniProtKB-KW"/>
</dbReference>
<dbReference type="GO" id="GO:0032259">
    <property type="term" value="P:methylation"/>
    <property type="evidence" value="ECO:0007669"/>
    <property type="project" value="UniProtKB-KW"/>
</dbReference>
<dbReference type="FunFam" id="3.40.50.150:FF:000147">
    <property type="entry name" value="Caffeoyl-CoA O-methyltransferase 1"/>
    <property type="match status" value="1"/>
</dbReference>
<dbReference type="Gene3D" id="3.40.50.150">
    <property type="entry name" value="Vaccinia Virus protein VP39"/>
    <property type="match status" value="1"/>
</dbReference>
<dbReference type="InterPro" id="IPR050362">
    <property type="entry name" value="Cation-dep_OMT"/>
</dbReference>
<dbReference type="InterPro" id="IPR029063">
    <property type="entry name" value="SAM-dependent_MTases_sf"/>
</dbReference>
<dbReference type="InterPro" id="IPR002935">
    <property type="entry name" value="SAM_O-MeTrfase"/>
</dbReference>
<dbReference type="PANTHER" id="PTHR10509:SF74">
    <property type="entry name" value="CAFFEOYL-COA O-METHYLTRANSFERASE 2"/>
    <property type="match status" value="1"/>
</dbReference>
<dbReference type="PANTHER" id="PTHR10509">
    <property type="entry name" value="O-METHYLTRANSFERASE-RELATED"/>
    <property type="match status" value="1"/>
</dbReference>
<dbReference type="Pfam" id="PF01596">
    <property type="entry name" value="Methyltransf_3"/>
    <property type="match status" value="1"/>
</dbReference>
<dbReference type="SUPFAM" id="SSF53335">
    <property type="entry name" value="S-adenosyl-L-methionine-dependent methyltransferases"/>
    <property type="match status" value="1"/>
</dbReference>
<dbReference type="PROSITE" id="PS51682">
    <property type="entry name" value="SAM_OMT_I"/>
    <property type="match status" value="1"/>
</dbReference>
<comment type="function">
    <text>Methylates caffeoyl-CoA to feruloyl-CoA and 5-hydroxyferuloyl-CoA to sinapoyl-CoA. Plays a role in the synthesis of feruloylated polysaccharides. Involved in the reinforcement of the plant cell wall. Also involved in the responding to wounding or pathogen challenge by the increased formation of cell wall-bound ferulic acid polymers.</text>
</comment>
<comment type="catalytic activity">
    <reaction>
        <text>(E)-caffeoyl-CoA + S-adenosyl-L-methionine = (E)-feruloyl-CoA + S-adenosyl-L-homocysteine + H(+)</text>
        <dbReference type="Rhea" id="RHEA:16925"/>
        <dbReference type="ChEBI" id="CHEBI:15378"/>
        <dbReference type="ChEBI" id="CHEBI:57856"/>
        <dbReference type="ChEBI" id="CHEBI:59789"/>
        <dbReference type="ChEBI" id="CHEBI:87136"/>
        <dbReference type="ChEBI" id="CHEBI:87305"/>
        <dbReference type="EC" id="2.1.1.104"/>
    </reaction>
</comment>
<comment type="cofactor">
    <cofactor evidence="1">
        <name>a divalent metal cation</name>
        <dbReference type="ChEBI" id="CHEBI:60240"/>
    </cofactor>
    <text evidence="1">Binds 1 divalent metal cation per subunit.</text>
</comment>
<comment type="pathway">
    <text>Aromatic compound metabolism; phenylpropanoid biosynthesis.</text>
</comment>
<comment type="similarity">
    <text evidence="2">Belongs to the class I-like SAM-binding methyltransferase superfamily. Cation-dependent O-methyltransferase family. CCoAMT subfamily.</text>
</comment>
<organism>
    <name type="scientific">Populus trichocarpa</name>
    <name type="common">Western balsam poplar</name>
    <name type="synonym">Populus balsamifera subsp. trichocarpa</name>
    <dbReference type="NCBI Taxonomy" id="3694"/>
    <lineage>
        <taxon>Eukaryota</taxon>
        <taxon>Viridiplantae</taxon>
        <taxon>Streptophyta</taxon>
        <taxon>Embryophyta</taxon>
        <taxon>Tracheophyta</taxon>
        <taxon>Spermatophyta</taxon>
        <taxon>Magnoliopsida</taxon>
        <taxon>eudicotyledons</taxon>
        <taxon>Gunneridae</taxon>
        <taxon>Pentapetalae</taxon>
        <taxon>rosids</taxon>
        <taxon>fabids</taxon>
        <taxon>Malpighiales</taxon>
        <taxon>Salicaceae</taxon>
        <taxon>Saliceae</taxon>
        <taxon>Populus</taxon>
    </lineage>
</organism>
<protein>
    <recommendedName>
        <fullName>Caffeoyl-CoA O-methyltransferase 1</fullName>
        <ecNumber>2.1.1.104</ecNumber>
    </recommendedName>
    <alternativeName>
        <fullName>Trans-caffeoyl-CoA 3-O-methyltransferase 1</fullName>
        <shortName>CCoAMT-1</shortName>
        <shortName>CCoAOMT-1</shortName>
    </alternativeName>
</protein>
<accession>O65862</accession>
<proteinExistence type="evidence at transcript level"/>
<keyword id="KW-0438">Lignin biosynthesis</keyword>
<keyword id="KW-0479">Metal-binding</keyword>
<keyword id="KW-0489">Methyltransferase</keyword>
<keyword id="KW-0949">S-adenosyl-L-methionine</keyword>
<keyword id="KW-0808">Transferase</keyword>
<sequence>MATNGEEQQSQAGRHQEVGHKSLLQSDALYQYILETSVYPREPECMKELREVTAKHPWNIMTTSADEGQFLNMLLKLVNAKNTMEIGVYTGYSLLATALAIPEDGKILAMDINRENYELGLPVIQKAGVAHKIDFKEGPALPVLDQMIEDGKCHGSFDFIFVDADKDNYINYHKRLIELVKVGGLIGYDNTLWNGSVVAPPDAPMRKYVRYYRDFVLELNKALAADPRIEICMLPVGDGITLCRRIQ</sequence>
<reference key="1">
    <citation type="submission" date="1998-03" db="EMBL/GenBank/DDBJ databases">
        <title>The cDNA cloning and expression study of caffeoyl-CoA 3-O-methyltransferase in poplar.</title>
        <authorList>
            <person name="Meyermans H."/>
            <person name="Ardiles-Diaz W."/>
            <person name="van Montagu M."/>
            <person name="Boerjan W."/>
        </authorList>
    </citation>
    <scope>NUCLEOTIDE SEQUENCE</scope>
    <source>
        <strain>cv. Trichobel</strain>
        <tissue>Xylem</tissue>
    </source>
</reference>
<reference key="2">
    <citation type="online journal article" date="1998" name="Plant Gene Register">
        <title>A gene encoding caffeoyl coenzyme A 3-O-methyltransferase (CCoAOMT) from Populus trichocarpa.</title>
        <authorList>
            <person name="Chen C."/>
            <person name="Meyermans H."/>
            <person name="Van Doorsselaere J."/>
            <person name="van Montagu M."/>
            <person name="Boerjan W."/>
        </authorList>
        <locator>PGR98-104</locator>
    </citation>
    <scope>NUCLEOTIDE SEQUENCE</scope>
    <source>
        <strain>cv. Trichobel</strain>
        <tissue>Leaf</tissue>
    </source>
</reference>
<reference key="3">
    <citation type="journal article" date="2000" name="J. Biol. Chem.">
        <title>Modifications in lignin and accumulation of phenolic glucosides in poplar xylem upon down-regulation of caffeoyl-coenzyme A O-methyltransferase, an enzyme involved in lignin biosynthesis.</title>
        <authorList>
            <person name="Meyermans H."/>
            <person name="Morreel K."/>
            <person name="Lapierre C."/>
            <person name="Pollet B."/>
            <person name="De Bruyn A."/>
            <person name="Busson R."/>
            <person name="Herdewijn P."/>
            <person name="Devreese B."/>
            <person name="Van Beeumen J."/>
            <person name="Marita J.M."/>
            <person name="Ralph J."/>
            <person name="Chen C."/>
            <person name="Burggraeve B."/>
            <person name="Van Montagu M."/>
            <person name="Messens E."/>
            <person name="Boerjan W."/>
        </authorList>
    </citation>
    <scope>NUCLEOTIDE SEQUENCE OF 65-247</scope>
    <source>
        <strain>cv. Trichbobel</strain>
        <tissue>Xylem</tissue>
    </source>
</reference>
<gene>
    <name type="primary">CCOAOMT1</name>
</gene>